<gene>
    <name evidence="1" type="primary">rplS</name>
    <name type="ordered locus">SAV1241</name>
</gene>
<evidence type="ECO:0000255" key="1">
    <source>
        <dbReference type="HAMAP-Rule" id="MF_00402"/>
    </source>
</evidence>
<evidence type="ECO:0000305" key="2"/>
<dbReference type="EMBL" id="BA000017">
    <property type="protein sequence ID" value="BAB57403.1"/>
    <property type="molecule type" value="Genomic_DNA"/>
</dbReference>
<dbReference type="RefSeq" id="WP_000181402.1">
    <property type="nucleotide sequence ID" value="NC_002758.2"/>
</dbReference>
<dbReference type="SMR" id="P66082"/>
<dbReference type="KEGG" id="sav:SAV1241"/>
<dbReference type="HOGENOM" id="CLU_103507_2_1_9"/>
<dbReference type="PhylomeDB" id="P66082"/>
<dbReference type="Proteomes" id="UP000002481">
    <property type="component" value="Chromosome"/>
</dbReference>
<dbReference type="GO" id="GO:0022625">
    <property type="term" value="C:cytosolic large ribosomal subunit"/>
    <property type="evidence" value="ECO:0007669"/>
    <property type="project" value="TreeGrafter"/>
</dbReference>
<dbReference type="GO" id="GO:0003735">
    <property type="term" value="F:structural constituent of ribosome"/>
    <property type="evidence" value="ECO:0007669"/>
    <property type="project" value="InterPro"/>
</dbReference>
<dbReference type="GO" id="GO:0006412">
    <property type="term" value="P:translation"/>
    <property type="evidence" value="ECO:0007669"/>
    <property type="project" value="UniProtKB-UniRule"/>
</dbReference>
<dbReference type="FunFam" id="2.30.30.790:FF:000001">
    <property type="entry name" value="50S ribosomal protein L19"/>
    <property type="match status" value="1"/>
</dbReference>
<dbReference type="Gene3D" id="2.30.30.790">
    <property type="match status" value="1"/>
</dbReference>
<dbReference type="HAMAP" id="MF_00402">
    <property type="entry name" value="Ribosomal_bL19"/>
    <property type="match status" value="1"/>
</dbReference>
<dbReference type="InterPro" id="IPR001857">
    <property type="entry name" value="Ribosomal_bL19"/>
</dbReference>
<dbReference type="InterPro" id="IPR018257">
    <property type="entry name" value="Ribosomal_bL19_CS"/>
</dbReference>
<dbReference type="InterPro" id="IPR038657">
    <property type="entry name" value="Ribosomal_bL19_sf"/>
</dbReference>
<dbReference type="InterPro" id="IPR008991">
    <property type="entry name" value="Translation_prot_SH3-like_sf"/>
</dbReference>
<dbReference type="NCBIfam" id="TIGR01024">
    <property type="entry name" value="rplS_bact"/>
    <property type="match status" value="1"/>
</dbReference>
<dbReference type="PANTHER" id="PTHR15680:SF9">
    <property type="entry name" value="LARGE RIBOSOMAL SUBUNIT PROTEIN BL19M"/>
    <property type="match status" value="1"/>
</dbReference>
<dbReference type="PANTHER" id="PTHR15680">
    <property type="entry name" value="RIBOSOMAL PROTEIN L19"/>
    <property type="match status" value="1"/>
</dbReference>
<dbReference type="Pfam" id="PF01245">
    <property type="entry name" value="Ribosomal_L19"/>
    <property type="match status" value="1"/>
</dbReference>
<dbReference type="PIRSF" id="PIRSF002191">
    <property type="entry name" value="Ribosomal_L19"/>
    <property type="match status" value="1"/>
</dbReference>
<dbReference type="PRINTS" id="PR00061">
    <property type="entry name" value="RIBOSOMALL19"/>
</dbReference>
<dbReference type="SUPFAM" id="SSF50104">
    <property type="entry name" value="Translation proteins SH3-like domain"/>
    <property type="match status" value="1"/>
</dbReference>
<dbReference type="PROSITE" id="PS01015">
    <property type="entry name" value="RIBOSOMAL_L19"/>
    <property type="match status" value="1"/>
</dbReference>
<protein>
    <recommendedName>
        <fullName evidence="1">Large ribosomal subunit protein bL19</fullName>
    </recommendedName>
    <alternativeName>
        <fullName evidence="2">50S ribosomal protein L19</fullName>
    </alternativeName>
</protein>
<organism>
    <name type="scientific">Staphylococcus aureus (strain Mu50 / ATCC 700699)</name>
    <dbReference type="NCBI Taxonomy" id="158878"/>
    <lineage>
        <taxon>Bacteria</taxon>
        <taxon>Bacillati</taxon>
        <taxon>Bacillota</taxon>
        <taxon>Bacilli</taxon>
        <taxon>Bacillales</taxon>
        <taxon>Staphylococcaceae</taxon>
        <taxon>Staphylococcus</taxon>
    </lineage>
</organism>
<keyword id="KW-0687">Ribonucleoprotein</keyword>
<keyword id="KW-0689">Ribosomal protein</keyword>
<proteinExistence type="inferred from homology"/>
<reference key="1">
    <citation type="journal article" date="2001" name="Lancet">
        <title>Whole genome sequencing of meticillin-resistant Staphylococcus aureus.</title>
        <authorList>
            <person name="Kuroda M."/>
            <person name="Ohta T."/>
            <person name="Uchiyama I."/>
            <person name="Baba T."/>
            <person name="Yuzawa H."/>
            <person name="Kobayashi I."/>
            <person name="Cui L."/>
            <person name="Oguchi A."/>
            <person name="Aoki K."/>
            <person name="Nagai Y."/>
            <person name="Lian J.-Q."/>
            <person name="Ito T."/>
            <person name="Kanamori M."/>
            <person name="Matsumaru H."/>
            <person name="Maruyama A."/>
            <person name="Murakami H."/>
            <person name="Hosoyama A."/>
            <person name="Mizutani-Ui Y."/>
            <person name="Takahashi N.K."/>
            <person name="Sawano T."/>
            <person name="Inoue R."/>
            <person name="Kaito C."/>
            <person name="Sekimizu K."/>
            <person name="Hirakawa H."/>
            <person name="Kuhara S."/>
            <person name="Goto S."/>
            <person name="Yabuzaki J."/>
            <person name="Kanehisa M."/>
            <person name="Yamashita A."/>
            <person name="Oshima K."/>
            <person name="Furuya K."/>
            <person name="Yoshino C."/>
            <person name="Shiba T."/>
            <person name="Hattori M."/>
            <person name="Ogasawara N."/>
            <person name="Hayashi H."/>
            <person name="Hiramatsu K."/>
        </authorList>
    </citation>
    <scope>NUCLEOTIDE SEQUENCE [LARGE SCALE GENOMIC DNA]</scope>
    <source>
        <strain>Mu50 / ATCC 700699</strain>
    </source>
</reference>
<comment type="function">
    <text evidence="1">This protein is located at the 30S-50S ribosomal subunit interface and may play a role in the structure and function of the aminoacyl-tRNA binding site.</text>
</comment>
<comment type="similarity">
    <text evidence="1">Belongs to the bacterial ribosomal protein bL19 family.</text>
</comment>
<accession>P66082</accession>
<accession>Q99UM9</accession>
<sequence length="116" mass="13376">MTNHKLIEAVTKSQLRTDLPSFRPGDTLRVHVRIIEGTRERIQVFEGIVIKRRGGGVSETFTVRKISSGVGVERTFPLHTPKIEKIEVKRRGKVRRAKLYYLRSLRGKAARIQEIR</sequence>
<feature type="chain" id="PRO_0000163529" description="Large ribosomal subunit protein bL19">
    <location>
        <begin position="1"/>
        <end position="116"/>
    </location>
</feature>
<name>RL19_STAAM</name>